<organism>
    <name type="scientific">Aspergillus terreus (strain NIH 2624 / FGSC A1156)</name>
    <dbReference type="NCBI Taxonomy" id="341663"/>
    <lineage>
        <taxon>Eukaryota</taxon>
        <taxon>Fungi</taxon>
        <taxon>Dikarya</taxon>
        <taxon>Ascomycota</taxon>
        <taxon>Pezizomycotina</taxon>
        <taxon>Eurotiomycetes</taxon>
        <taxon>Eurotiomycetidae</taxon>
        <taxon>Eurotiales</taxon>
        <taxon>Aspergillaceae</taxon>
        <taxon>Aspergillus</taxon>
        <taxon>Aspergillus subgen. Circumdati</taxon>
    </lineage>
</organism>
<comment type="function">
    <text evidence="4">Proline-directed serine/threonine-protein kinase involved in a signal transduction pathway that is activated by changes in the osmolarity of the extracellular environment. Controls osmotic regulation of transcription of target genes.</text>
</comment>
<comment type="catalytic activity">
    <reaction evidence="2">
        <text>L-seryl-[protein] + ATP = O-phospho-L-seryl-[protein] + ADP + H(+)</text>
        <dbReference type="Rhea" id="RHEA:17989"/>
        <dbReference type="Rhea" id="RHEA-COMP:9863"/>
        <dbReference type="Rhea" id="RHEA-COMP:11604"/>
        <dbReference type="ChEBI" id="CHEBI:15378"/>
        <dbReference type="ChEBI" id="CHEBI:29999"/>
        <dbReference type="ChEBI" id="CHEBI:30616"/>
        <dbReference type="ChEBI" id="CHEBI:83421"/>
        <dbReference type="ChEBI" id="CHEBI:456216"/>
        <dbReference type="EC" id="2.7.11.24"/>
    </reaction>
    <physiologicalReaction direction="left-to-right" evidence="2">
        <dbReference type="Rhea" id="RHEA:17990"/>
    </physiologicalReaction>
</comment>
<comment type="catalytic activity">
    <reaction evidence="2">
        <text>L-threonyl-[protein] + ATP = O-phospho-L-threonyl-[protein] + ADP + H(+)</text>
        <dbReference type="Rhea" id="RHEA:46608"/>
        <dbReference type="Rhea" id="RHEA-COMP:11060"/>
        <dbReference type="Rhea" id="RHEA-COMP:11605"/>
        <dbReference type="ChEBI" id="CHEBI:15378"/>
        <dbReference type="ChEBI" id="CHEBI:30013"/>
        <dbReference type="ChEBI" id="CHEBI:30616"/>
        <dbReference type="ChEBI" id="CHEBI:61977"/>
        <dbReference type="ChEBI" id="CHEBI:456216"/>
        <dbReference type="EC" id="2.7.11.24"/>
    </reaction>
    <physiologicalReaction direction="left-to-right" evidence="2">
        <dbReference type="Rhea" id="RHEA:46609"/>
    </physiologicalReaction>
</comment>
<comment type="cofactor">
    <cofactor evidence="3">
        <name>Mg(2+)</name>
        <dbReference type="ChEBI" id="CHEBI:18420"/>
    </cofactor>
</comment>
<comment type="activity regulation">
    <text evidence="1">Activated by tyrosine and threonine phosphorylation.</text>
</comment>
<comment type="subcellular location">
    <subcellularLocation>
        <location evidence="1">Cytoplasm</location>
    </subcellularLocation>
    <subcellularLocation>
        <location evidence="1">Nucleus</location>
    </subcellularLocation>
</comment>
<comment type="domain">
    <text>The TXY motif contains the threonine and tyrosine residues whose phosphorylation activates the MAP kinases.</text>
</comment>
<comment type="PTM">
    <text evidence="1">Dually phosphorylated on Thr-171 and Tyr-173, which activates the enzyme.</text>
</comment>
<comment type="similarity">
    <text evidence="5">Belongs to the protein kinase superfamily. Ser/Thr protein kinase family. MAP kinase subfamily. HOG1 sub-subfamily.</text>
</comment>
<keyword id="KW-0010">Activator</keyword>
<keyword id="KW-0067">ATP-binding</keyword>
<keyword id="KW-0963">Cytoplasm</keyword>
<keyword id="KW-0418">Kinase</keyword>
<keyword id="KW-0547">Nucleotide-binding</keyword>
<keyword id="KW-0539">Nucleus</keyword>
<keyword id="KW-0597">Phosphoprotein</keyword>
<keyword id="KW-1185">Reference proteome</keyword>
<keyword id="KW-0723">Serine/threonine-protein kinase</keyword>
<keyword id="KW-0804">Transcription</keyword>
<keyword id="KW-0805">Transcription regulation</keyword>
<keyword id="KW-0808">Transferase</keyword>
<feature type="chain" id="PRO_0000289676" description="Mitogen-activated protein kinase hog1">
    <location>
        <begin position="1"/>
        <end position="364"/>
    </location>
</feature>
<feature type="domain" description="Protein kinase" evidence="5">
    <location>
        <begin position="20"/>
        <end position="299"/>
    </location>
</feature>
<feature type="short sequence motif" description="TXY">
    <location>
        <begin position="171"/>
        <end position="173"/>
    </location>
</feature>
<feature type="active site" description="Proton acceptor" evidence="5 6">
    <location>
        <position position="141"/>
    </location>
</feature>
<feature type="binding site" evidence="5">
    <location>
        <begin position="26"/>
        <end position="34"/>
    </location>
    <ligand>
        <name>ATP</name>
        <dbReference type="ChEBI" id="CHEBI:30616"/>
    </ligand>
</feature>
<feature type="binding site" evidence="5">
    <location>
        <position position="49"/>
    </location>
    <ligand>
        <name>ATP</name>
        <dbReference type="ChEBI" id="CHEBI:30616"/>
    </ligand>
</feature>
<feature type="modified residue" description="Phosphothreonine" evidence="1">
    <location>
        <position position="171"/>
    </location>
</feature>
<feature type="modified residue" description="Phosphotyrosine" evidence="1">
    <location>
        <position position="173"/>
    </location>
</feature>
<sequence>MAEFVRAQIFGTTFEITSRYTDLQPVGMGAFGLVCSAKDQLTGQPVAVKKIMKPFSTPVLSKRTYRELKLLKHLRHENIISLSDIFISPLEDIYFVTELLGTDLHRLLTSRPLEKQFIQYFLYQILRGLKYVHSAGVVHRDLKPSNILINENCDLKICDFGLARIQDPQMTGYVSTRYYRAPEIMLTWQKYDVEVDIWSAACIFAEMLEGKPLFPGKDHVNQFSIITELLGTPPDDVIRGICSENTLRFVKSLPKRERQPLANKFKNADPDAIDLLERMLVFDSKKRIRAGEALAHEYLAPYHDPTDEPEAQEKFDWSFNDADLPVDTWKIMMYSEILDFHNIEQANEGEVLVEGAGTAPQGFA</sequence>
<dbReference type="EC" id="2.7.11.24" evidence="2"/>
<dbReference type="EMBL" id="CH476594">
    <property type="protein sequence ID" value="EAU39135.1"/>
    <property type="molecule type" value="Genomic_DNA"/>
</dbReference>
<dbReference type="RefSeq" id="XP_001210575.1">
    <property type="nucleotide sequence ID" value="XM_001210575.1"/>
</dbReference>
<dbReference type="SMR" id="Q0D0P5"/>
<dbReference type="STRING" id="341663.Q0D0P5"/>
<dbReference type="GeneID" id="4355243"/>
<dbReference type="eggNOG" id="KOG0660">
    <property type="taxonomic scope" value="Eukaryota"/>
</dbReference>
<dbReference type="OrthoDB" id="192887at2759"/>
<dbReference type="Proteomes" id="UP000007963">
    <property type="component" value="Unassembled WGS sequence"/>
</dbReference>
<dbReference type="GO" id="GO:0005737">
    <property type="term" value="C:cytoplasm"/>
    <property type="evidence" value="ECO:0007669"/>
    <property type="project" value="UniProtKB-SubCell"/>
</dbReference>
<dbReference type="GO" id="GO:0005634">
    <property type="term" value="C:nucleus"/>
    <property type="evidence" value="ECO:0007669"/>
    <property type="project" value="UniProtKB-SubCell"/>
</dbReference>
<dbReference type="GO" id="GO:0005524">
    <property type="term" value="F:ATP binding"/>
    <property type="evidence" value="ECO:0007669"/>
    <property type="project" value="UniProtKB-KW"/>
</dbReference>
<dbReference type="GO" id="GO:0004707">
    <property type="term" value="F:MAP kinase activity"/>
    <property type="evidence" value="ECO:0007669"/>
    <property type="project" value="UniProtKB-EC"/>
</dbReference>
<dbReference type="GO" id="GO:0106310">
    <property type="term" value="F:protein serine kinase activity"/>
    <property type="evidence" value="ECO:0007669"/>
    <property type="project" value="RHEA"/>
</dbReference>
<dbReference type="GO" id="GO:0051403">
    <property type="term" value="P:stress-activated MAPK cascade"/>
    <property type="evidence" value="ECO:0007669"/>
    <property type="project" value="InterPro"/>
</dbReference>
<dbReference type="CDD" id="cd07856">
    <property type="entry name" value="STKc_Sty1_Hog1"/>
    <property type="match status" value="1"/>
</dbReference>
<dbReference type="FunFam" id="1.10.510.10:FF:000049">
    <property type="entry name" value="Mitogen-activated protein kinase"/>
    <property type="match status" value="1"/>
</dbReference>
<dbReference type="FunFam" id="3.30.200.20:FF:000050">
    <property type="entry name" value="Mitogen-activated protein kinase"/>
    <property type="match status" value="1"/>
</dbReference>
<dbReference type="Gene3D" id="3.30.200.20">
    <property type="entry name" value="Phosphorylase Kinase, domain 1"/>
    <property type="match status" value="1"/>
</dbReference>
<dbReference type="Gene3D" id="1.10.510.10">
    <property type="entry name" value="Transferase(Phosphotransferase) domain 1"/>
    <property type="match status" value="1"/>
</dbReference>
<dbReference type="InterPro" id="IPR011009">
    <property type="entry name" value="Kinase-like_dom_sf"/>
</dbReference>
<dbReference type="InterPro" id="IPR050117">
    <property type="entry name" value="MAP_kinase"/>
</dbReference>
<dbReference type="InterPro" id="IPR003527">
    <property type="entry name" value="MAP_kinase_CS"/>
</dbReference>
<dbReference type="InterPro" id="IPR008352">
    <property type="entry name" value="MAPK_p38-like"/>
</dbReference>
<dbReference type="InterPro" id="IPR038783">
    <property type="entry name" value="MAPK_Sty1/Hog1"/>
</dbReference>
<dbReference type="InterPro" id="IPR000719">
    <property type="entry name" value="Prot_kinase_dom"/>
</dbReference>
<dbReference type="InterPro" id="IPR017441">
    <property type="entry name" value="Protein_kinase_ATP_BS"/>
</dbReference>
<dbReference type="InterPro" id="IPR008271">
    <property type="entry name" value="Ser/Thr_kinase_AS"/>
</dbReference>
<dbReference type="PANTHER" id="PTHR24055">
    <property type="entry name" value="MITOGEN-ACTIVATED PROTEIN KINASE"/>
    <property type="match status" value="1"/>
</dbReference>
<dbReference type="Pfam" id="PF00069">
    <property type="entry name" value="Pkinase"/>
    <property type="match status" value="1"/>
</dbReference>
<dbReference type="PRINTS" id="PR01773">
    <property type="entry name" value="P38MAPKINASE"/>
</dbReference>
<dbReference type="SMART" id="SM00220">
    <property type="entry name" value="S_TKc"/>
    <property type="match status" value="1"/>
</dbReference>
<dbReference type="SUPFAM" id="SSF56112">
    <property type="entry name" value="Protein kinase-like (PK-like)"/>
    <property type="match status" value="1"/>
</dbReference>
<dbReference type="PROSITE" id="PS01351">
    <property type="entry name" value="MAPK"/>
    <property type="match status" value="1"/>
</dbReference>
<dbReference type="PROSITE" id="PS00107">
    <property type="entry name" value="PROTEIN_KINASE_ATP"/>
    <property type="match status" value="1"/>
</dbReference>
<dbReference type="PROSITE" id="PS50011">
    <property type="entry name" value="PROTEIN_KINASE_DOM"/>
    <property type="match status" value="1"/>
</dbReference>
<dbReference type="PROSITE" id="PS00108">
    <property type="entry name" value="PROTEIN_KINASE_ST"/>
    <property type="match status" value="1"/>
</dbReference>
<evidence type="ECO:0000250" key="1"/>
<evidence type="ECO:0000250" key="2">
    <source>
        <dbReference type="UniProtKB" id="P32485"/>
    </source>
</evidence>
<evidence type="ECO:0000250" key="3">
    <source>
        <dbReference type="UniProtKB" id="Q16539"/>
    </source>
</evidence>
<evidence type="ECO:0000250" key="4">
    <source>
        <dbReference type="UniProtKB" id="Q4WSF6"/>
    </source>
</evidence>
<evidence type="ECO:0000255" key="5">
    <source>
        <dbReference type="PROSITE-ProRule" id="PRU00159"/>
    </source>
</evidence>
<evidence type="ECO:0000255" key="6">
    <source>
        <dbReference type="PROSITE-ProRule" id="PRU10027"/>
    </source>
</evidence>
<gene>
    <name type="primary">hog1</name>
    <name type="ORF">ATEG_00489</name>
</gene>
<proteinExistence type="inferred from homology"/>
<reference key="1">
    <citation type="submission" date="2005-09" db="EMBL/GenBank/DDBJ databases">
        <title>Annotation of the Aspergillus terreus NIH2624 genome.</title>
        <authorList>
            <person name="Birren B.W."/>
            <person name="Lander E.S."/>
            <person name="Galagan J.E."/>
            <person name="Nusbaum C."/>
            <person name="Devon K."/>
            <person name="Henn M."/>
            <person name="Ma L.-J."/>
            <person name="Jaffe D.B."/>
            <person name="Butler J."/>
            <person name="Alvarez P."/>
            <person name="Gnerre S."/>
            <person name="Grabherr M."/>
            <person name="Kleber M."/>
            <person name="Mauceli E.W."/>
            <person name="Brockman W."/>
            <person name="Rounsley S."/>
            <person name="Young S.K."/>
            <person name="LaButti K."/>
            <person name="Pushparaj V."/>
            <person name="DeCaprio D."/>
            <person name="Crawford M."/>
            <person name="Koehrsen M."/>
            <person name="Engels R."/>
            <person name="Montgomery P."/>
            <person name="Pearson M."/>
            <person name="Howarth C."/>
            <person name="Larson L."/>
            <person name="Luoma S."/>
            <person name="White J."/>
            <person name="Alvarado L."/>
            <person name="Kodira C.D."/>
            <person name="Zeng Q."/>
            <person name="Oleary S."/>
            <person name="Yandava C."/>
            <person name="Denning D.W."/>
            <person name="Nierman W.C."/>
            <person name="Milne T."/>
            <person name="Madden K."/>
        </authorList>
    </citation>
    <scope>NUCLEOTIDE SEQUENCE [LARGE SCALE GENOMIC DNA]</scope>
    <source>
        <strain>NIH 2624 / FGSC A1156</strain>
    </source>
</reference>
<protein>
    <recommendedName>
        <fullName>Mitogen-activated protein kinase hog1</fullName>
        <shortName>MAP kinase hog</shortName>
        <ecNumber evidence="2">2.7.11.24</ecNumber>
    </recommendedName>
</protein>
<accession>Q0D0P5</accession>
<name>HOG1_ASPTN</name>